<sequence length="433" mass="46190">MTDILNYNKSEEIFSAAQQLMPGGVSSPVRAFKSVGGQPIVFDRVKGPFAWDIDGNRYIDYIGSWGPAICGHAHPEVTTALQEAIEKGTSFGAPCVLENKLAEMVIDAVPSVEMVRFVNSGTEACMAVLRLMRAFTGRDKVIKFDGCYHGHADMFLVKAGSGVATLGLPDSPGVPRTTTANTLTAPYNDLEAVKKLFSENPDAISGVILEPIVGNAGFITPEPGFLEGLRELTTENGSLLVFDEVMTGFRISYGGAQEKFGVTPDLTTLGKVIGGGLPVGAYGGKKEIMSMVAPSGPVYQAGTLSGNPLAMTAGIKTLELLKQDGTYDKLDSTTSRLIEGIIQSAENNGIAINGGSISGMFGFFLCDGPVRNFEEAKTNNSELFGKLHREMLQRGIYLAPSPFEAGFTSLAHSEDEIDQTIEAFDESFNAIKN</sequence>
<keyword id="KW-0149">Chlorophyll biosynthesis</keyword>
<keyword id="KW-0963">Cytoplasm</keyword>
<keyword id="KW-0413">Isomerase</keyword>
<keyword id="KW-0627">Porphyrin biosynthesis</keyword>
<keyword id="KW-0663">Pyridoxal phosphate</keyword>
<organism>
    <name type="scientific">Prochlorococcus marinus (strain MIT 9215)</name>
    <dbReference type="NCBI Taxonomy" id="93060"/>
    <lineage>
        <taxon>Bacteria</taxon>
        <taxon>Bacillati</taxon>
        <taxon>Cyanobacteriota</taxon>
        <taxon>Cyanophyceae</taxon>
        <taxon>Synechococcales</taxon>
        <taxon>Prochlorococcaceae</taxon>
        <taxon>Prochlorococcus</taxon>
    </lineage>
</organism>
<name>GSA_PROM2</name>
<dbReference type="EC" id="5.4.3.8" evidence="1"/>
<dbReference type="EMBL" id="CP000825">
    <property type="protein sequence ID" value="ABV50180.1"/>
    <property type="molecule type" value="Genomic_DNA"/>
</dbReference>
<dbReference type="RefSeq" id="WP_012007307.1">
    <property type="nucleotide sequence ID" value="NC_009840.1"/>
</dbReference>
<dbReference type="SMR" id="A8G3J9"/>
<dbReference type="STRING" id="93060.P9215_05651"/>
<dbReference type="KEGG" id="pmh:P9215_05651"/>
<dbReference type="eggNOG" id="COG0001">
    <property type="taxonomic scope" value="Bacteria"/>
</dbReference>
<dbReference type="HOGENOM" id="CLU_016922_1_5_3"/>
<dbReference type="OrthoDB" id="9807885at2"/>
<dbReference type="UniPathway" id="UPA00251">
    <property type="reaction ID" value="UER00317"/>
</dbReference>
<dbReference type="UniPathway" id="UPA00668"/>
<dbReference type="Proteomes" id="UP000002014">
    <property type="component" value="Chromosome"/>
</dbReference>
<dbReference type="GO" id="GO:0005737">
    <property type="term" value="C:cytoplasm"/>
    <property type="evidence" value="ECO:0007669"/>
    <property type="project" value="UniProtKB-SubCell"/>
</dbReference>
<dbReference type="GO" id="GO:0042286">
    <property type="term" value="F:glutamate-1-semialdehyde 2,1-aminomutase activity"/>
    <property type="evidence" value="ECO:0007669"/>
    <property type="project" value="UniProtKB-UniRule"/>
</dbReference>
<dbReference type="GO" id="GO:0030170">
    <property type="term" value="F:pyridoxal phosphate binding"/>
    <property type="evidence" value="ECO:0007669"/>
    <property type="project" value="InterPro"/>
</dbReference>
<dbReference type="GO" id="GO:0008483">
    <property type="term" value="F:transaminase activity"/>
    <property type="evidence" value="ECO:0007669"/>
    <property type="project" value="InterPro"/>
</dbReference>
<dbReference type="GO" id="GO:0015995">
    <property type="term" value="P:chlorophyll biosynthetic process"/>
    <property type="evidence" value="ECO:0007669"/>
    <property type="project" value="UniProtKB-UniRule"/>
</dbReference>
<dbReference type="GO" id="GO:0006782">
    <property type="term" value="P:protoporphyrinogen IX biosynthetic process"/>
    <property type="evidence" value="ECO:0007669"/>
    <property type="project" value="UniProtKB-UniRule"/>
</dbReference>
<dbReference type="CDD" id="cd00610">
    <property type="entry name" value="OAT_like"/>
    <property type="match status" value="1"/>
</dbReference>
<dbReference type="FunFam" id="3.40.640.10:FF:000021">
    <property type="entry name" value="Glutamate-1-semialdehyde 2,1-aminomutase"/>
    <property type="match status" value="1"/>
</dbReference>
<dbReference type="Gene3D" id="3.90.1150.10">
    <property type="entry name" value="Aspartate Aminotransferase, domain 1"/>
    <property type="match status" value="1"/>
</dbReference>
<dbReference type="Gene3D" id="3.40.640.10">
    <property type="entry name" value="Type I PLP-dependent aspartate aminotransferase-like (Major domain)"/>
    <property type="match status" value="1"/>
</dbReference>
<dbReference type="HAMAP" id="MF_00375">
    <property type="entry name" value="HemL_aminotrans_3"/>
    <property type="match status" value="1"/>
</dbReference>
<dbReference type="InterPro" id="IPR004639">
    <property type="entry name" value="4pyrrol_synth_GluAld_NH2Trfase"/>
</dbReference>
<dbReference type="InterPro" id="IPR005814">
    <property type="entry name" value="Aminotrans_3"/>
</dbReference>
<dbReference type="InterPro" id="IPR049704">
    <property type="entry name" value="Aminotrans_3_PPA_site"/>
</dbReference>
<dbReference type="InterPro" id="IPR015424">
    <property type="entry name" value="PyrdxlP-dep_Trfase"/>
</dbReference>
<dbReference type="InterPro" id="IPR015421">
    <property type="entry name" value="PyrdxlP-dep_Trfase_major"/>
</dbReference>
<dbReference type="InterPro" id="IPR015422">
    <property type="entry name" value="PyrdxlP-dep_Trfase_small"/>
</dbReference>
<dbReference type="NCBIfam" id="TIGR00713">
    <property type="entry name" value="hemL"/>
    <property type="match status" value="1"/>
</dbReference>
<dbReference type="NCBIfam" id="NF000818">
    <property type="entry name" value="PRK00062.1"/>
    <property type="match status" value="1"/>
</dbReference>
<dbReference type="PANTHER" id="PTHR43713">
    <property type="entry name" value="GLUTAMATE-1-SEMIALDEHYDE 2,1-AMINOMUTASE"/>
    <property type="match status" value="1"/>
</dbReference>
<dbReference type="PANTHER" id="PTHR43713:SF3">
    <property type="entry name" value="GLUTAMATE-1-SEMIALDEHYDE 2,1-AMINOMUTASE 1, CHLOROPLASTIC-RELATED"/>
    <property type="match status" value="1"/>
</dbReference>
<dbReference type="Pfam" id="PF00202">
    <property type="entry name" value="Aminotran_3"/>
    <property type="match status" value="1"/>
</dbReference>
<dbReference type="SUPFAM" id="SSF53383">
    <property type="entry name" value="PLP-dependent transferases"/>
    <property type="match status" value="1"/>
</dbReference>
<dbReference type="PROSITE" id="PS00600">
    <property type="entry name" value="AA_TRANSFER_CLASS_3"/>
    <property type="match status" value="1"/>
</dbReference>
<reference key="1">
    <citation type="journal article" date="2007" name="PLoS Genet.">
        <title>Patterns and implications of gene gain and loss in the evolution of Prochlorococcus.</title>
        <authorList>
            <person name="Kettler G.C."/>
            <person name="Martiny A.C."/>
            <person name="Huang K."/>
            <person name="Zucker J."/>
            <person name="Coleman M.L."/>
            <person name="Rodrigue S."/>
            <person name="Chen F."/>
            <person name="Lapidus A."/>
            <person name="Ferriera S."/>
            <person name="Johnson J."/>
            <person name="Steglich C."/>
            <person name="Church G.M."/>
            <person name="Richardson P."/>
            <person name="Chisholm S.W."/>
        </authorList>
    </citation>
    <scope>NUCLEOTIDE SEQUENCE [LARGE SCALE GENOMIC DNA]</scope>
    <source>
        <strain>MIT 9215</strain>
    </source>
</reference>
<comment type="catalytic activity">
    <reaction evidence="1">
        <text>(S)-4-amino-5-oxopentanoate = 5-aminolevulinate</text>
        <dbReference type="Rhea" id="RHEA:14265"/>
        <dbReference type="ChEBI" id="CHEBI:57501"/>
        <dbReference type="ChEBI" id="CHEBI:356416"/>
        <dbReference type="EC" id="5.4.3.8"/>
    </reaction>
</comment>
<comment type="cofactor">
    <cofactor evidence="1">
        <name>pyridoxal 5'-phosphate</name>
        <dbReference type="ChEBI" id="CHEBI:597326"/>
    </cofactor>
</comment>
<comment type="pathway">
    <text evidence="1">Porphyrin-containing compound metabolism; protoporphyrin-IX biosynthesis; 5-aminolevulinate from L-glutamyl-tRNA(Glu): step 2/2.</text>
</comment>
<comment type="pathway">
    <text evidence="1">Porphyrin-containing compound metabolism; chlorophyll biosynthesis.</text>
</comment>
<comment type="subunit">
    <text evidence="1">Homodimer.</text>
</comment>
<comment type="subcellular location">
    <subcellularLocation>
        <location evidence="1">Cytoplasm</location>
    </subcellularLocation>
</comment>
<comment type="similarity">
    <text evidence="1">Belongs to the class-III pyridoxal-phosphate-dependent aminotransferase family. HemL subfamily.</text>
</comment>
<protein>
    <recommendedName>
        <fullName evidence="1">Glutamate-1-semialdehyde 2,1-aminomutase</fullName>
        <shortName evidence="1">GSA</shortName>
        <ecNumber evidence="1">5.4.3.8</ecNumber>
    </recommendedName>
    <alternativeName>
        <fullName evidence="1">Glutamate-1-semialdehyde aminotransferase</fullName>
        <shortName evidence="1">GSA-AT</shortName>
    </alternativeName>
</protein>
<feature type="chain" id="PRO_1000059995" description="Glutamate-1-semialdehyde 2,1-aminomutase">
    <location>
        <begin position="1"/>
        <end position="433"/>
    </location>
</feature>
<feature type="modified residue" description="N6-(pyridoxal phosphate)lysine" evidence="1">
    <location>
        <position position="271"/>
    </location>
</feature>
<proteinExistence type="inferred from homology"/>
<evidence type="ECO:0000255" key="1">
    <source>
        <dbReference type="HAMAP-Rule" id="MF_00375"/>
    </source>
</evidence>
<gene>
    <name evidence="1" type="primary">hemL</name>
    <name type="ordered locus">P9215_05651</name>
</gene>
<accession>A8G3J9</accession>